<protein>
    <recommendedName>
        <fullName>Tegument protein VP16 homolog</fullName>
    </recommendedName>
    <alternativeName>
        <fullName>Alpha trans-inducing protein</fullName>
    </alternativeName>
    <alternativeName>
        <fullName>Alpha-TIF</fullName>
    </alternativeName>
</protein>
<proteinExistence type="inferred from homology"/>
<organismHost>
    <name type="scientific">Bos taurus</name>
    <name type="common">Bovine</name>
    <dbReference type="NCBI Taxonomy" id="9913"/>
</organismHost>
<sequence length="504" mass="54029">MSGRIKTAGRALASQCGGAAAATMDPYDAIEAFDDSLLGSPLAAGPLYDGPSPARFALPPPRPAPLAALLERMQAELGFPDGPALLRAMERWNEDLFSCLPTNADLYADAALLSADADAVVGAMYLAVPGDAERLDLNAHANQPLPAPPASEEGLPEYVAGVQAHFLAELRAREERYAGLFLGYCRALLQHLRATAARGRGAAGAGAQADRLRQLVAARYYREASRLARLAFAHMYVATAREVSWRLHSQQSQAQGVFVSLYYAWPQRRQFTCLFHPVLFNHGVVALEDGFLDAAELRRLNYRRRELGLPLVRAGLVEVEVGPLVEEPPFSGSLPRALGFLNYQVRAKMGAPAEAGGGWRRSGSTRTRGRAARSTTGRLQRPCCGPRRRAKCCRATPRQRLRARGEPRHTSGSGAFSQGRRPGRVCRLGWACKARSGPARGGPGPSPVRSGLGLSRARGSPGPGPACGGPSRARGGRRRASPANPFGGTYDALLGDRLNQLLDF</sequence>
<reference key="1">
    <citation type="journal article" date="1992" name="Gene">
        <title>Sequences of the bovine herpesvirus 1 homologue of herpes simplex virus type-1 alpha-trans-inducing factor (UL48).</title>
        <authorList>
            <person name="Carpenter D.E."/>
            <person name="Misra V."/>
        </authorList>
    </citation>
    <scope>NUCLEOTIDE SEQUENCE [GENOMIC DNA]</scope>
</reference>
<name>VP16_BHV1P</name>
<accession>P30020</accession>
<feature type="chain" id="PRO_0000115802" description="Tegument protein VP16 homolog">
    <location>
        <begin position="1"/>
        <end position="504"/>
    </location>
</feature>
<feature type="region of interest" description="Disordered" evidence="3">
    <location>
        <begin position="354"/>
        <end position="381"/>
    </location>
</feature>
<feature type="region of interest" description="Disordered" evidence="3">
    <location>
        <begin position="395"/>
        <end position="421"/>
    </location>
</feature>
<feature type="region of interest" description="Disordered" evidence="3">
    <location>
        <begin position="435"/>
        <end position="486"/>
    </location>
</feature>
<feature type="compositionally biased region" description="Low complexity" evidence="3">
    <location>
        <begin position="361"/>
        <end position="378"/>
    </location>
</feature>
<feature type="compositionally biased region" description="Low complexity" evidence="3">
    <location>
        <begin position="447"/>
        <end position="460"/>
    </location>
</feature>
<evidence type="ECO:0000250" key="1"/>
<evidence type="ECO:0000250" key="2">
    <source>
        <dbReference type="UniProtKB" id="P04486"/>
    </source>
</evidence>
<evidence type="ECO:0000256" key="3">
    <source>
        <dbReference type="SAM" id="MobiDB-lite"/>
    </source>
</evidence>
<evidence type="ECO:0000305" key="4"/>
<dbReference type="EMBL" id="Z11610">
    <property type="protein sequence ID" value="CAA77682.1"/>
    <property type="molecule type" value="Genomic_DNA"/>
</dbReference>
<dbReference type="PIR" id="JC1306">
    <property type="entry name" value="JC1306"/>
</dbReference>
<dbReference type="SMR" id="P30020"/>
<dbReference type="IntAct" id="P30020">
    <property type="interactions" value="1"/>
</dbReference>
<dbReference type="GO" id="GO:0042025">
    <property type="term" value="C:host cell nucleus"/>
    <property type="evidence" value="ECO:0007669"/>
    <property type="project" value="UniProtKB-SubCell"/>
</dbReference>
<dbReference type="GO" id="GO:0019033">
    <property type="term" value="C:viral tegument"/>
    <property type="evidence" value="ECO:0007669"/>
    <property type="project" value="UniProtKB-SubCell"/>
</dbReference>
<dbReference type="GO" id="GO:0003677">
    <property type="term" value="F:DNA binding"/>
    <property type="evidence" value="ECO:0007669"/>
    <property type="project" value="UniProtKB-KW"/>
</dbReference>
<dbReference type="GO" id="GO:0039695">
    <property type="term" value="P:DNA-templated viral transcription"/>
    <property type="evidence" value="ECO:0000250"/>
    <property type="project" value="UniProtKB"/>
</dbReference>
<dbReference type="GO" id="GO:0006355">
    <property type="term" value="P:regulation of DNA-templated transcription"/>
    <property type="evidence" value="ECO:0007669"/>
    <property type="project" value="InterPro"/>
</dbReference>
<dbReference type="FunFam" id="1.10.1290.10:FF:000001">
    <property type="entry name" value="Tegument protein VP16"/>
    <property type="match status" value="1"/>
</dbReference>
<dbReference type="Gene3D" id="1.10.1290.10">
    <property type="entry name" value="Alpha trans-inducing (Alpha-TIF)"/>
    <property type="match status" value="1"/>
</dbReference>
<dbReference type="InterPro" id="IPR003174">
    <property type="entry name" value="Alpha_TIF"/>
</dbReference>
<dbReference type="InterPro" id="IPR036538">
    <property type="entry name" value="Alpha_TIF_sf"/>
</dbReference>
<dbReference type="Pfam" id="PF02232">
    <property type="entry name" value="Alpha_TIF"/>
    <property type="match status" value="1"/>
</dbReference>
<dbReference type="SMART" id="SM00814">
    <property type="entry name" value="Alpha_TIF"/>
    <property type="match status" value="1"/>
</dbReference>
<dbReference type="SUPFAM" id="SSF56548">
    <property type="entry name" value="Conserved core of transcriptional regulatory protein vp16"/>
    <property type="match status" value="1"/>
</dbReference>
<keyword id="KW-0238">DNA-binding</keyword>
<keyword id="KW-1048">Host nucleus</keyword>
<keyword id="KW-0945">Host-virus interaction</keyword>
<keyword id="KW-0597">Phosphoprotein</keyword>
<keyword id="KW-0804">Transcription</keyword>
<keyword id="KW-0805">Transcription regulation</keyword>
<keyword id="KW-0946">Virion</keyword>
<keyword id="KW-0920">Virion tegument</keyword>
<organism>
    <name type="scientific">Bovine herpesvirus 1.1 (strain P8-2)</name>
    <name type="common">BoHV-1</name>
    <name type="synonym">Infectious bovine rhinotracheitis virus</name>
    <dbReference type="NCBI Taxonomy" id="10324"/>
    <lineage>
        <taxon>Viruses</taxon>
        <taxon>Duplodnaviria</taxon>
        <taxon>Heunggongvirae</taxon>
        <taxon>Peploviricota</taxon>
        <taxon>Herviviricetes</taxon>
        <taxon>Herpesvirales</taxon>
        <taxon>Orthoherpesviridae</taxon>
        <taxon>Alphaherpesvirinae</taxon>
        <taxon>Varicellovirus</taxon>
        <taxon>Varicellovirus bovinealpha1</taxon>
    </lineage>
</organism>
<comment type="function">
    <text evidence="1">Transcriptional activator of immediate-early (IE) gene products (alpha genes). Acts as a key activator of lytic infection by initiating the lytic program through the assembly of the transcriptional regulatory VP16-induced complex composed of VP16 and two cellular factors, HCFC1 and POU2F1. VP16-induced complex represents a regulatory switch: when it is on, it promotes IE-gene expression and thus lytic infection, and when it is off, it limits IE-gene transcription favoring latent infection (By similarity).</text>
</comment>
<comment type="function">
    <text evidence="4">May play a role in the aggregation of tegument proteins around nucleocapsids during virus morphogenesis.</text>
</comment>
<comment type="subunit">
    <text evidence="1">Associates with the VP16-induced complex; binding to host HCFC1 activates VP16 for association with the octamer motif-binding host protein POU2F1, to form a multiprotein-DNA complex responsible for activating transcription of the viral immediate early genes.</text>
</comment>
<comment type="subcellular location">
    <subcellularLocation>
        <location evidence="2">Virion tegument</location>
    </subcellularLocation>
    <subcellularLocation>
        <location evidence="2">Host nucleus</location>
    </subcellularLocation>
</comment>
<comment type="similarity">
    <text evidence="4">Belongs to the herpesviridae tegument protein VP16 protein family.</text>
</comment>